<comment type="function">
    <text evidence="5">Negatively regulates Golgi-to-plasma membrane trafficking by interacting with PI4KB and inhibiting its activity.</text>
</comment>
<comment type="subunit">
    <text evidence="5">Interacts with PI4KB. This binding competes with FREQ/NCS1 binding in a calcium-dependent manner.</text>
</comment>
<comment type="subcellular location">
    <subcellularLocation>
        <location evidence="6">Golgi apparatus</location>
        <location evidence="6">trans-Golgi network membrane</location>
        <topology evidence="6">Single-pass type IV membrane protein</topology>
    </subcellularLocation>
    <subcellularLocation>
        <location evidence="1">Cytoplasm</location>
        <location evidence="1">Perinuclear region</location>
    </subcellularLocation>
    <subcellularLocation>
        <location evidence="1">Cell membrane</location>
        <topology evidence="1">Single-pass type IV membrane protein</topology>
    </subcellularLocation>
</comment>
<comment type="tissue specificity">
    <text evidence="4">Brain-specific. Restricted to the CA3 region of the hippocampus, entorhinal cortex, the antero-dorsal and antero-ventral thalamus and the inferior and superior colliculus.</text>
</comment>
<comment type="domain">
    <text evidence="1">The C-terminal transmembrane domain (TMD) is necessary and sufficient for membrane targeting.</text>
</comment>
<comment type="miscellaneous">
    <text>The calcium-binding affinity is not regulated by magnesium.</text>
</comment>
<name>CABP7_RAT</name>
<sequence length="215" mass="24453">MPFHPVTAALMYRGIYTVPNLLSEQRPVDIPEDELEEIREAFKVFDRDGNGFISKQELGTAMRSLGYMPNEVELEVIIQRLDMDGDGQVDFEEFVTLLGPKLSTSGIPEKFHGTDFDTVFWKCDMQKLTVDELKRLLYDTFCEHLSMKDIENIIMTEEESHLGTAEECPVDVETCSNQQIRQTCVRKSLICAFAIAFIISVMLIAANQVLRSGMK</sequence>
<accession>Q66H96</accession>
<feature type="chain" id="PRO_0000383472" description="Calcium-binding protein 7">
    <location>
        <begin position="1"/>
        <end position="215"/>
    </location>
</feature>
<feature type="topological domain" description="Cytoplasmic" evidence="2">
    <location>
        <begin position="1"/>
        <end position="188"/>
    </location>
</feature>
<feature type="transmembrane region" description="Helical; Anchor for type IV membrane protein" evidence="2">
    <location>
        <begin position="189"/>
        <end position="209"/>
    </location>
</feature>
<feature type="topological domain" description="Extracellular" evidence="2">
    <location>
        <begin position="210"/>
        <end position="215"/>
    </location>
</feature>
<feature type="domain" description="EF-hand 1" evidence="3">
    <location>
        <begin position="33"/>
        <end position="68"/>
    </location>
</feature>
<feature type="domain" description="EF-hand 2" evidence="3">
    <location>
        <begin position="69"/>
        <end position="104"/>
    </location>
</feature>
<feature type="binding site" evidence="3">
    <location>
        <position position="46"/>
    </location>
    <ligand>
        <name>Ca(2+)</name>
        <dbReference type="ChEBI" id="CHEBI:29108"/>
        <label>1</label>
    </ligand>
</feature>
<feature type="binding site" evidence="3">
    <location>
        <position position="48"/>
    </location>
    <ligand>
        <name>Ca(2+)</name>
        <dbReference type="ChEBI" id="CHEBI:29108"/>
        <label>1</label>
    </ligand>
</feature>
<feature type="binding site" evidence="3">
    <location>
        <position position="50"/>
    </location>
    <ligand>
        <name>Ca(2+)</name>
        <dbReference type="ChEBI" id="CHEBI:29108"/>
        <label>1</label>
    </ligand>
</feature>
<feature type="binding site" evidence="3">
    <location>
        <position position="57"/>
    </location>
    <ligand>
        <name>Ca(2+)</name>
        <dbReference type="ChEBI" id="CHEBI:29108"/>
        <label>1</label>
    </ligand>
</feature>
<feature type="binding site" evidence="3">
    <location>
        <position position="82"/>
    </location>
    <ligand>
        <name>Ca(2+)</name>
        <dbReference type="ChEBI" id="CHEBI:29108"/>
        <label>2</label>
    </ligand>
</feature>
<feature type="binding site" evidence="3">
    <location>
        <position position="84"/>
    </location>
    <ligand>
        <name>Ca(2+)</name>
        <dbReference type="ChEBI" id="CHEBI:29108"/>
        <label>2</label>
    </ligand>
</feature>
<feature type="binding site" evidence="3">
    <location>
        <position position="86"/>
    </location>
    <ligand>
        <name>Ca(2+)</name>
        <dbReference type="ChEBI" id="CHEBI:29108"/>
        <label>2</label>
    </ligand>
</feature>
<feature type="binding site" evidence="3">
    <location>
        <position position="88"/>
    </location>
    <ligand>
        <name>Ca(2+)</name>
        <dbReference type="ChEBI" id="CHEBI:29108"/>
        <label>2</label>
    </ligand>
</feature>
<feature type="binding site" evidence="3">
    <location>
        <position position="93"/>
    </location>
    <ligand>
        <name>Ca(2+)</name>
        <dbReference type="ChEBI" id="CHEBI:29108"/>
        <label>2</label>
    </ligand>
</feature>
<evidence type="ECO:0000250" key="1"/>
<evidence type="ECO:0000255" key="2"/>
<evidence type="ECO:0000255" key="3">
    <source>
        <dbReference type="PROSITE-ProRule" id="PRU00448"/>
    </source>
</evidence>
<evidence type="ECO:0000269" key="4">
    <source>
    </source>
</evidence>
<evidence type="ECO:0000269" key="5">
    <source>
    </source>
</evidence>
<evidence type="ECO:0000305" key="6">
    <source>
    </source>
</evidence>
<organism>
    <name type="scientific">Rattus norvegicus</name>
    <name type="common">Rat</name>
    <dbReference type="NCBI Taxonomy" id="10116"/>
    <lineage>
        <taxon>Eukaryota</taxon>
        <taxon>Metazoa</taxon>
        <taxon>Chordata</taxon>
        <taxon>Craniata</taxon>
        <taxon>Vertebrata</taxon>
        <taxon>Euteleostomi</taxon>
        <taxon>Mammalia</taxon>
        <taxon>Eutheria</taxon>
        <taxon>Euarchontoglires</taxon>
        <taxon>Glires</taxon>
        <taxon>Rodentia</taxon>
        <taxon>Myomorpha</taxon>
        <taxon>Muroidea</taxon>
        <taxon>Muridae</taxon>
        <taxon>Murinae</taxon>
        <taxon>Rattus</taxon>
    </lineage>
</organism>
<keyword id="KW-0106">Calcium</keyword>
<keyword id="KW-1003">Cell membrane</keyword>
<keyword id="KW-0963">Cytoplasm</keyword>
<keyword id="KW-0333">Golgi apparatus</keyword>
<keyword id="KW-0472">Membrane</keyword>
<keyword id="KW-0479">Metal-binding</keyword>
<keyword id="KW-1185">Reference proteome</keyword>
<keyword id="KW-0677">Repeat</keyword>
<keyword id="KW-0812">Transmembrane</keyword>
<keyword id="KW-1133">Transmembrane helix</keyword>
<proteinExistence type="evidence at protein level"/>
<protein>
    <recommendedName>
        <fullName>Calcium-binding protein 7</fullName>
        <shortName>CaBP7</shortName>
    </recommendedName>
    <alternativeName>
        <fullName>Calneuron II</fullName>
    </alternativeName>
    <alternativeName>
        <fullName>Calneuron-2</fullName>
    </alternativeName>
</protein>
<reference key="1">
    <citation type="submission" date="2004-11" db="EMBL/GenBank/DDBJ databases">
        <title>Rat calcium binding protein 7.</title>
        <authorList>
            <person name="Kim H."/>
            <person name="Hong S."/>
        </authorList>
    </citation>
    <scope>NUCLEOTIDE SEQUENCE [MRNA]</scope>
    <source>
        <strain>Sprague-Dawley</strain>
        <tissue>Brain</tissue>
    </source>
</reference>
<reference key="2">
    <citation type="journal article" date="2004" name="Genome Res.">
        <title>The status, quality, and expansion of the NIH full-length cDNA project: the Mammalian Gene Collection (MGC).</title>
        <authorList>
            <consortium name="The MGC Project Team"/>
        </authorList>
    </citation>
    <scope>NUCLEOTIDE SEQUENCE [LARGE SCALE MRNA]</scope>
    <source>
        <tissue>Lung</tissue>
    </source>
</reference>
<reference key="3">
    <citation type="journal article" date="2006" name="Biochim. Biophys. Acta">
        <title>Neuronal Ca2+ signaling via caldendrin and calneurons.</title>
        <authorList>
            <person name="Mikhaylova M."/>
            <person name="Sharma Y."/>
            <person name="Reissner C."/>
            <person name="Nagel F."/>
            <person name="Aravind P."/>
            <person name="Rajini B."/>
            <person name="Smalla K.-H."/>
            <person name="Gundelfinger E.D."/>
            <person name="Kreutz M.R."/>
        </authorList>
    </citation>
    <scope>TISSUE SPECIFICITY</scope>
</reference>
<reference key="4">
    <citation type="journal article" date="2009" name="Proc. Natl. Acad. Sci. U.S.A.">
        <title>Calneurons provide a calcium threshold for trans-Golgi network to plasma membrane trafficking.</title>
        <authorList>
            <person name="Mikhaylova M."/>
            <person name="Reddy P.P."/>
            <person name="Munsch T."/>
            <person name="Landgraf P."/>
            <person name="Suman S.K."/>
            <person name="Smalla K.-H."/>
            <person name="Gundelfinger E.D."/>
            <person name="Sharma Y."/>
            <person name="Kreutz M.R."/>
        </authorList>
    </citation>
    <scope>SUBCELLULAR LOCATION</scope>
    <scope>INTERACTION WITH PI4KB</scope>
    <scope>FUNCTION</scope>
</reference>
<gene>
    <name type="primary">Cabp7</name>
    <name type="synonym">Caln2</name>
</gene>
<dbReference type="EMBL" id="AY841152">
    <property type="protein sequence ID" value="AAW21810.1"/>
    <property type="molecule type" value="mRNA"/>
</dbReference>
<dbReference type="EMBL" id="BC081959">
    <property type="protein sequence ID" value="AAH81959.1"/>
    <property type="molecule type" value="mRNA"/>
</dbReference>
<dbReference type="RefSeq" id="NP_001007731.1">
    <property type="nucleotide sequence ID" value="NM_001007730.2"/>
</dbReference>
<dbReference type="BMRB" id="Q66H96"/>
<dbReference type="SMR" id="Q66H96"/>
<dbReference type="FunCoup" id="Q66H96">
    <property type="interactions" value="127"/>
</dbReference>
<dbReference type="STRING" id="10116.ENSRNOP00000074795"/>
<dbReference type="PhosphoSitePlus" id="Q66H96"/>
<dbReference type="PaxDb" id="10116-ENSRNOP00000010439"/>
<dbReference type="Ensembl" id="ENSRNOT00000078179.2">
    <property type="protein sequence ID" value="ENSRNOP00000074795.1"/>
    <property type="gene ID" value="ENSRNOG00000057703.2"/>
</dbReference>
<dbReference type="GeneID" id="360970"/>
<dbReference type="KEGG" id="rno:360970"/>
<dbReference type="UCSC" id="RGD:1359269">
    <property type="organism name" value="rat"/>
</dbReference>
<dbReference type="AGR" id="RGD:1359269"/>
<dbReference type="CTD" id="164633"/>
<dbReference type="RGD" id="1359269">
    <property type="gene designation" value="Cabp7"/>
</dbReference>
<dbReference type="eggNOG" id="KOG0027">
    <property type="taxonomic scope" value="Eukaryota"/>
</dbReference>
<dbReference type="GeneTree" id="ENSGT00940000159368"/>
<dbReference type="HOGENOM" id="CLU_106115_0_0_1"/>
<dbReference type="InParanoid" id="Q66H96"/>
<dbReference type="OMA" id="TQQIKQT"/>
<dbReference type="OrthoDB" id="26525at2759"/>
<dbReference type="PhylomeDB" id="Q66H96"/>
<dbReference type="TreeFam" id="TF331025"/>
<dbReference type="PRO" id="PR:Q66H96"/>
<dbReference type="Proteomes" id="UP000002494">
    <property type="component" value="Chromosome 14"/>
</dbReference>
<dbReference type="Bgee" id="ENSRNOG00000057703">
    <property type="expression patterns" value="Expressed in cerebellum and 3 other cell types or tissues"/>
</dbReference>
<dbReference type="GO" id="GO:0048471">
    <property type="term" value="C:perinuclear region of cytoplasm"/>
    <property type="evidence" value="ECO:0007669"/>
    <property type="project" value="UniProtKB-SubCell"/>
</dbReference>
<dbReference type="GO" id="GO:0005886">
    <property type="term" value="C:plasma membrane"/>
    <property type="evidence" value="ECO:0007669"/>
    <property type="project" value="UniProtKB-SubCell"/>
</dbReference>
<dbReference type="GO" id="GO:0032588">
    <property type="term" value="C:trans-Golgi network membrane"/>
    <property type="evidence" value="ECO:0000266"/>
    <property type="project" value="RGD"/>
</dbReference>
<dbReference type="GO" id="GO:0005509">
    <property type="term" value="F:calcium ion binding"/>
    <property type="evidence" value="ECO:0007669"/>
    <property type="project" value="InterPro"/>
</dbReference>
<dbReference type="CDD" id="cd00051">
    <property type="entry name" value="EFh"/>
    <property type="match status" value="1"/>
</dbReference>
<dbReference type="FunFam" id="1.10.238.10:FF:000115">
    <property type="entry name" value="Calcium-binding protein 8"/>
    <property type="match status" value="1"/>
</dbReference>
<dbReference type="Gene3D" id="1.10.238.10">
    <property type="entry name" value="EF-hand"/>
    <property type="match status" value="1"/>
</dbReference>
<dbReference type="InterPro" id="IPR051111">
    <property type="entry name" value="Ca-binding_regulatory"/>
</dbReference>
<dbReference type="InterPro" id="IPR011992">
    <property type="entry name" value="EF-hand-dom_pair"/>
</dbReference>
<dbReference type="InterPro" id="IPR018247">
    <property type="entry name" value="EF_Hand_1_Ca_BS"/>
</dbReference>
<dbReference type="InterPro" id="IPR002048">
    <property type="entry name" value="EF_hand_dom"/>
</dbReference>
<dbReference type="InterPro" id="IPR001751">
    <property type="entry name" value="S100/CaBP7/8-like_CS"/>
</dbReference>
<dbReference type="PANTHER" id="PTHR46311:SF1">
    <property type="entry name" value="CALCIUM-BINDING PROTEIN 7"/>
    <property type="match status" value="1"/>
</dbReference>
<dbReference type="PANTHER" id="PTHR46311">
    <property type="entry name" value="CALCIUM-BINDING PROTEIN 8-RELATED"/>
    <property type="match status" value="1"/>
</dbReference>
<dbReference type="Pfam" id="PF13499">
    <property type="entry name" value="EF-hand_7"/>
    <property type="match status" value="1"/>
</dbReference>
<dbReference type="SMART" id="SM00054">
    <property type="entry name" value="EFh"/>
    <property type="match status" value="2"/>
</dbReference>
<dbReference type="SUPFAM" id="SSF47473">
    <property type="entry name" value="EF-hand"/>
    <property type="match status" value="1"/>
</dbReference>
<dbReference type="PROSITE" id="PS00018">
    <property type="entry name" value="EF_HAND_1"/>
    <property type="match status" value="2"/>
</dbReference>
<dbReference type="PROSITE" id="PS50222">
    <property type="entry name" value="EF_HAND_2"/>
    <property type="match status" value="2"/>
</dbReference>